<accession>A7FI94</accession>
<organism>
    <name type="scientific">Yersinia pseudotuberculosis serotype O:1b (strain IP 31758)</name>
    <dbReference type="NCBI Taxonomy" id="349747"/>
    <lineage>
        <taxon>Bacteria</taxon>
        <taxon>Pseudomonadati</taxon>
        <taxon>Pseudomonadota</taxon>
        <taxon>Gammaproteobacteria</taxon>
        <taxon>Enterobacterales</taxon>
        <taxon>Yersiniaceae</taxon>
        <taxon>Yersinia</taxon>
    </lineage>
</organism>
<gene>
    <name evidence="1" type="primary">fadR</name>
    <name type="ordered locus">YpsIP31758_1999</name>
</gene>
<evidence type="ECO:0000255" key="1">
    <source>
        <dbReference type="HAMAP-Rule" id="MF_00696"/>
    </source>
</evidence>
<dbReference type="EMBL" id="CP000720">
    <property type="protein sequence ID" value="ABS49891.1"/>
    <property type="molecule type" value="Genomic_DNA"/>
</dbReference>
<dbReference type="RefSeq" id="WP_002211688.1">
    <property type="nucleotide sequence ID" value="NC_009708.1"/>
</dbReference>
<dbReference type="SMR" id="A7FI94"/>
<dbReference type="GeneID" id="96665563"/>
<dbReference type="KEGG" id="ypi:YpsIP31758_1999"/>
<dbReference type="HOGENOM" id="CLU_017584_9_4_6"/>
<dbReference type="Proteomes" id="UP000002412">
    <property type="component" value="Chromosome"/>
</dbReference>
<dbReference type="GO" id="GO:0005737">
    <property type="term" value="C:cytoplasm"/>
    <property type="evidence" value="ECO:0007669"/>
    <property type="project" value="UniProtKB-SubCell"/>
</dbReference>
<dbReference type="GO" id="GO:0003677">
    <property type="term" value="F:DNA binding"/>
    <property type="evidence" value="ECO:0007669"/>
    <property type="project" value="UniProtKB-KW"/>
</dbReference>
<dbReference type="GO" id="GO:0003700">
    <property type="term" value="F:DNA-binding transcription factor activity"/>
    <property type="evidence" value="ECO:0007669"/>
    <property type="project" value="UniProtKB-UniRule"/>
</dbReference>
<dbReference type="GO" id="GO:0000062">
    <property type="term" value="F:fatty-acyl-CoA binding"/>
    <property type="evidence" value="ECO:0007669"/>
    <property type="project" value="InterPro"/>
</dbReference>
<dbReference type="GO" id="GO:0006631">
    <property type="term" value="P:fatty acid metabolic process"/>
    <property type="evidence" value="ECO:0007669"/>
    <property type="project" value="UniProtKB-KW"/>
</dbReference>
<dbReference type="GO" id="GO:0019217">
    <property type="term" value="P:regulation of fatty acid metabolic process"/>
    <property type="evidence" value="ECO:0007669"/>
    <property type="project" value="UniProtKB-UniRule"/>
</dbReference>
<dbReference type="CDD" id="cd07377">
    <property type="entry name" value="WHTH_GntR"/>
    <property type="match status" value="1"/>
</dbReference>
<dbReference type="FunFam" id="1.10.10.10:FF:000036">
    <property type="entry name" value="Fatty acid metabolism regulator protein"/>
    <property type="match status" value="1"/>
</dbReference>
<dbReference type="Gene3D" id="1.20.120.530">
    <property type="entry name" value="GntR ligand-binding domain-like"/>
    <property type="match status" value="1"/>
</dbReference>
<dbReference type="Gene3D" id="1.10.10.10">
    <property type="entry name" value="Winged helix-like DNA-binding domain superfamily/Winged helix DNA-binding domain"/>
    <property type="match status" value="1"/>
</dbReference>
<dbReference type="HAMAP" id="MF_00696">
    <property type="entry name" value="HTH_FadR"/>
    <property type="match status" value="1"/>
</dbReference>
<dbReference type="InterPro" id="IPR014178">
    <property type="entry name" value="FA-response_TF_FadR"/>
</dbReference>
<dbReference type="InterPro" id="IPR028374">
    <property type="entry name" value="FadR_C"/>
</dbReference>
<dbReference type="InterPro" id="IPR008920">
    <property type="entry name" value="TF_FadR/GntR_C"/>
</dbReference>
<dbReference type="InterPro" id="IPR000524">
    <property type="entry name" value="Tscrpt_reg_HTH_GntR"/>
</dbReference>
<dbReference type="InterPro" id="IPR036388">
    <property type="entry name" value="WH-like_DNA-bd_sf"/>
</dbReference>
<dbReference type="InterPro" id="IPR036390">
    <property type="entry name" value="WH_DNA-bd_sf"/>
</dbReference>
<dbReference type="NCBIfam" id="TIGR02812">
    <property type="entry name" value="fadR_gamma"/>
    <property type="match status" value="1"/>
</dbReference>
<dbReference type="NCBIfam" id="NF003444">
    <property type="entry name" value="PRK04984.1"/>
    <property type="match status" value="1"/>
</dbReference>
<dbReference type="PANTHER" id="PTHR43537:SF52">
    <property type="entry name" value="FATTY ACID METABOLISM REGULATOR PROTEIN"/>
    <property type="match status" value="1"/>
</dbReference>
<dbReference type="PANTHER" id="PTHR43537">
    <property type="entry name" value="TRANSCRIPTIONAL REGULATOR, GNTR FAMILY"/>
    <property type="match status" value="1"/>
</dbReference>
<dbReference type="Pfam" id="PF07840">
    <property type="entry name" value="FadR_C"/>
    <property type="match status" value="1"/>
</dbReference>
<dbReference type="Pfam" id="PF00392">
    <property type="entry name" value="GntR"/>
    <property type="match status" value="1"/>
</dbReference>
<dbReference type="PRINTS" id="PR00035">
    <property type="entry name" value="HTHGNTR"/>
</dbReference>
<dbReference type="SMART" id="SM00345">
    <property type="entry name" value="HTH_GNTR"/>
    <property type="match status" value="1"/>
</dbReference>
<dbReference type="SUPFAM" id="SSF48008">
    <property type="entry name" value="GntR ligand-binding domain-like"/>
    <property type="match status" value="1"/>
</dbReference>
<dbReference type="SUPFAM" id="SSF46785">
    <property type="entry name" value="Winged helix' DNA-binding domain"/>
    <property type="match status" value="1"/>
</dbReference>
<dbReference type="PROSITE" id="PS50949">
    <property type="entry name" value="HTH_GNTR"/>
    <property type="match status" value="1"/>
</dbReference>
<protein>
    <recommendedName>
        <fullName evidence="1">Fatty acid metabolism regulator protein</fullName>
    </recommendedName>
</protein>
<reference key="1">
    <citation type="journal article" date="2007" name="PLoS Genet.">
        <title>The complete genome sequence of Yersinia pseudotuberculosis IP31758, the causative agent of Far East scarlet-like fever.</title>
        <authorList>
            <person name="Eppinger M."/>
            <person name="Rosovitz M.J."/>
            <person name="Fricke W.F."/>
            <person name="Rasko D.A."/>
            <person name="Kokorina G."/>
            <person name="Fayolle C."/>
            <person name="Lindler L.E."/>
            <person name="Carniel E."/>
            <person name="Ravel J."/>
        </authorList>
    </citation>
    <scope>NUCLEOTIDE SEQUENCE [LARGE SCALE GENOMIC DNA]</scope>
    <source>
        <strain>IP 31758</strain>
    </source>
</reference>
<name>FADR_YERP3</name>
<proteinExistence type="inferred from homology"/>
<sequence length="239" mass="26902">MVIKAQSPAGFAEEYIIESIWNNRFPPGSILPAERELSELIGVTRTTLREVLQRLARDGWLTIQHGKPTKVNNFWETSGLNILETLARLDHDSVPQLIDNLLAVRTNIATIFVRTAIRHHPEKAQEILARAKTVDDNAEAFTALDYGIFRGLAFASGNPIYGLILNGLKGLYTRVGRYYFSNPEARKLALTFYNKLSTLCDTESYDQVLECLRTYGKESGAIWHSMQGTMPSDLAEARR</sequence>
<feature type="chain" id="PRO_1000062059" description="Fatty acid metabolism regulator protein">
    <location>
        <begin position="1"/>
        <end position="239"/>
    </location>
</feature>
<feature type="domain" description="HTH gntR-type" evidence="1">
    <location>
        <begin position="6"/>
        <end position="74"/>
    </location>
</feature>
<feature type="DNA-binding region" description="H-T-H motif" evidence="1">
    <location>
        <begin position="34"/>
        <end position="53"/>
    </location>
</feature>
<comment type="function">
    <text evidence="1">Multifunctional regulator of fatty acid metabolism.</text>
</comment>
<comment type="subunit">
    <text evidence="1">Homodimer.</text>
</comment>
<comment type="subcellular location">
    <subcellularLocation>
        <location evidence="1">Cytoplasm</location>
    </subcellularLocation>
</comment>
<keyword id="KW-0010">Activator</keyword>
<keyword id="KW-0963">Cytoplasm</keyword>
<keyword id="KW-0238">DNA-binding</keyword>
<keyword id="KW-0276">Fatty acid metabolism</keyword>
<keyword id="KW-0443">Lipid metabolism</keyword>
<keyword id="KW-0678">Repressor</keyword>
<keyword id="KW-0804">Transcription</keyword>
<keyword id="KW-0805">Transcription regulation</keyword>